<keyword id="KW-0687">Ribonucleoprotein</keyword>
<keyword id="KW-0689">Ribosomal protein</keyword>
<keyword id="KW-0694">RNA-binding</keyword>
<keyword id="KW-0699">rRNA-binding</keyword>
<feature type="chain" id="PRO_1000205710" description="Large ribosomal subunit protein bL20">
    <location>
        <begin position="1"/>
        <end position="118"/>
    </location>
</feature>
<evidence type="ECO:0000255" key="1">
    <source>
        <dbReference type="HAMAP-Rule" id="MF_00382"/>
    </source>
</evidence>
<evidence type="ECO:0000305" key="2"/>
<gene>
    <name evidence="1" type="primary">rplT</name>
    <name type="ordered locus">BWG_1530</name>
</gene>
<accession>C4ZYH8</accession>
<organism>
    <name type="scientific">Escherichia coli (strain K12 / MC4100 / BW2952)</name>
    <dbReference type="NCBI Taxonomy" id="595496"/>
    <lineage>
        <taxon>Bacteria</taxon>
        <taxon>Pseudomonadati</taxon>
        <taxon>Pseudomonadota</taxon>
        <taxon>Gammaproteobacteria</taxon>
        <taxon>Enterobacterales</taxon>
        <taxon>Enterobacteriaceae</taxon>
        <taxon>Escherichia</taxon>
    </lineage>
</organism>
<name>RL20_ECOBW</name>
<sequence length="118" mass="13497">MARVKRGVIARARHKKILKQAKGYYGARSRVYRVAFQAVIKAGQYAYRDRRQRKRQFRQLWIARINAAARQNGISYSKFINGLKKASVEIDRKILADIAVFDKVAFTALVEKAKAALA</sequence>
<proteinExistence type="inferred from homology"/>
<reference key="1">
    <citation type="journal article" date="2009" name="J. Bacteriol.">
        <title>Genomic sequencing reveals regulatory mutations and recombinational events in the widely used MC4100 lineage of Escherichia coli K-12.</title>
        <authorList>
            <person name="Ferenci T."/>
            <person name="Zhou Z."/>
            <person name="Betteridge T."/>
            <person name="Ren Y."/>
            <person name="Liu Y."/>
            <person name="Feng L."/>
            <person name="Reeves P.R."/>
            <person name="Wang L."/>
        </authorList>
    </citation>
    <scope>NUCLEOTIDE SEQUENCE [LARGE SCALE GENOMIC DNA]</scope>
    <source>
        <strain>K12 / MC4100 / BW2952</strain>
    </source>
</reference>
<dbReference type="EMBL" id="CP001396">
    <property type="protein sequence ID" value="ACR61857.1"/>
    <property type="molecule type" value="Genomic_DNA"/>
</dbReference>
<dbReference type="RefSeq" id="WP_000124850.1">
    <property type="nucleotide sequence ID" value="NC_012759.1"/>
</dbReference>
<dbReference type="SMR" id="C4ZYH8"/>
<dbReference type="GeneID" id="98388757"/>
<dbReference type="KEGG" id="ebw:BWG_1530"/>
<dbReference type="HOGENOM" id="CLU_123265_0_1_6"/>
<dbReference type="GO" id="GO:1990904">
    <property type="term" value="C:ribonucleoprotein complex"/>
    <property type="evidence" value="ECO:0007669"/>
    <property type="project" value="UniProtKB-KW"/>
</dbReference>
<dbReference type="GO" id="GO:0005840">
    <property type="term" value="C:ribosome"/>
    <property type="evidence" value="ECO:0007669"/>
    <property type="project" value="UniProtKB-KW"/>
</dbReference>
<dbReference type="GO" id="GO:0019843">
    <property type="term" value="F:rRNA binding"/>
    <property type="evidence" value="ECO:0007669"/>
    <property type="project" value="UniProtKB-UniRule"/>
</dbReference>
<dbReference type="GO" id="GO:0003735">
    <property type="term" value="F:structural constituent of ribosome"/>
    <property type="evidence" value="ECO:0007669"/>
    <property type="project" value="InterPro"/>
</dbReference>
<dbReference type="GO" id="GO:0000027">
    <property type="term" value="P:ribosomal large subunit assembly"/>
    <property type="evidence" value="ECO:0007669"/>
    <property type="project" value="UniProtKB-UniRule"/>
</dbReference>
<dbReference type="GO" id="GO:0006412">
    <property type="term" value="P:translation"/>
    <property type="evidence" value="ECO:0007669"/>
    <property type="project" value="InterPro"/>
</dbReference>
<dbReference type="CDD" id="cd07026">
    <property type="entry name" value="Ribosomal_L20"/>
    <property type="match status" value="1"/>
</dbReference>
<dbReference type="FunFam" id="1.10.1900.20:FF:000001">
    <property type="entry name" value="50S ribosomal protein L20"/>
    <property type="match status" value="1"/>
</dbReference>
<dbReference type="Gene3D" id="6.10.160.10">
    <property type="match status" value="1"/>
</dbReference>
<dbReference type="Gene3D" id="1.10.1900.20">
    <property type="entry name" value="Ribosomal protein L20"/>
    <property type="match status" value="1"/>
</dbReference>
<dbReference type="HAMAP" id="MF_00382">
    <property type="entry name" value="Ribosomal_bL20"/>
    <property type="match status" value="1"/>
</dbReference>
<dbReference type="InterPro" id="IPR005813">
    <property type="entry name" value="Ribosomal_bL20"/>
</dbReference>
<dbReference type="InterPro" id="IPR049946">
    <property type="entry name" value="RIBOSOMAL_L20_CS"/>
</dbReference>
<dbReference type="InterPro" id="IPR035566">
    <property type="entry name" value="Ribosomal_protein_bL20_C"/>
</dbReference>
<dbReference type="NCBIfam" id="TIGR01032">
    <property type="entry name" value="rplT_bact"/>
    <property type="match status" value="1"/>
</dbReference>
<dbReference type="PANTHER" id="PTHR10986">
    <property type="entry name" value="39S RIBOSOMAL PROTEIN L20"/>
    <property type="match status" value="1"/>
</dbReference>
<dbReference type="Pfam" id="PF00453">
    <property type="entry name" value="Ribosomal_L20"/>
    <property type="match status" value="1"/>
</dbReference>
<dbReference type="PRINTS" id="PR00062">
    <property type="entry name" value="RIBOSOMALL20"/>
</dbReference>
<dbReference type="SUPFAM" id="SSF74731">
    <property type="entry name" value="Ribosomal protein L20"/>
    <property type="match status" value="1"/>
</dbReference>
<dbReference type="PROSITE" id="PS00937">
    <property type="entry name" value="RIBOSOMAL_L20"/>
    <property type="match status" value="1"/>
</dbReference>
<comment type="function">
    <text evidence="1">Binds directly to 23S ribosomal RNA and is necessary for the in vitro assembly process of the 50S ribosomal subunit. It is not involved in the protein synthesizing functions of that subunit.</text>
</comment>
<comment type="similarity">
    <text evidence="1">Belongs to the bacterial ribosomal protein bL20 family.</text>
</comment>
<protein>
    <recommendedName>
        <fullName evidence="1">Large ribosomal subunit protein bL20</fullName>
    </recommendedName>
    <alternativeName>
        <fullName evidence="2">50S ribosomal protein L20</fullName>
    </alternativeName>
</protein>